<proteinExistence type="evidence at protein level"/>
<accession>O13156</accession>
<comment type="function">
    <text evidence="4">Coreceptor for GDNF, a neurotrophic factor that enhances survival and morphological differentiation of dopaminergic neurons and increases their high-affinity dopamine uptake (PubMed:9192899). GDNF-binding leads to autophosphorylation and activation of the RET receptor (PubMed:9192899).</text>
</comment>
<comment type="subunit">
    <text evidence="4">Interacts with GDNF ligand and RET: forms a 2:2:2 ternary complex composed of GDNF ligand, GFRA1 and RET receptor.</text>
</comment>
<comment type="subcellular location">
    <subcellularLocation>
        <location evidence="2">Cell membrane</location>
        <topology evidence="2">Lipid-anchor</topology>
        <topology evidence="2">GPI-anchor</topology>
    </subcellularLocation>
    <subcellularLocation>
        <location evidence="2">Golgi apparatus</location>
        <location evidence="2">trans-Golgi network</location>
    </subcellularLocation>
    <subcellularLocation>
        <location evidence="2">Endosome</location>
    </subcellularLocation>
    <subcellularLocation>
        <location evidence="2">Endosome</location>
        <location evidence="2">Multivesicular body</location>
    </subcellularLocation>
    <text evidence="2">Localizes mainly to the plasma membrane. In the presence of SORL1, shifts to vesicular structures, including trans-Golgi network, endosomes and multivesicular bodies.</text>
</comment>
<comment type="similarity">
    <text evidence="5">Belongs to the GDNFR family.</text>
</comment>
<feature type="signal peptide" evidence="3">
    <location>
        <begin position="1"/>
        <end position="27"/>
    </location>
</feature>
<feature type="chain" id="PRO_0000010775" description="GDNF family receptor alpha-1">
    <location>
        <begin position="28"/>
        <end position="430"/>
    </location>
</feature>
<feature type="propeptide" id="PRO_0000010776" description="Removed in mature form" evidence="3">
    <location>
        <begin position="431"/>
        <end position="469"/>
    </location>
</feature>
<feature type="repeat" description="1">
    <location>
        <begin position="28"/>
        <end position="116"/>
    </location>
</feature>
<feature type="repeat" description="2">
    <location>
        <begin position="149"/>
        <end position="237"/>
    </location>
</feature>
<feature type="repeat" description="3">
    <location>
        <begin position="238"/>
        <end position="341"/>
    </location>
</feature>
<feature type="lipid moiety-binding region" description="GPI-anchor amidated serine" evidence="3">
    <location>
        <position position="430"/>
    </location>
</feature>
<feature type="glycosylation site" description="N-linked (GlcNAc...) asparagine" evidence="3">
    <location>
        <position position="62"/>
    </location>
</feature>
<feature type="glycosylation site" description="N-linked (GlcNAc...) asparagine" evidence="3">
    <location>
        <position position="163"/>
    </location>
</feature>
<feature type="glycosylation site" description="N-linked (GlcNAc...) asparagine" evidence="3">
    <location>
        <position position="346"/>
    </location>
</feature>
<feature type="glycosylation site" description="N-linked (GlcNAc...) asparagine" evidence="3">
    <location>
        <position position="405"/>
    </location>
</feature>
<feature type="disulfide bond" evidence="2">
    <location>
        <begin position="39"/>
        <end position="45"/>
    </location>
</feature>
<feature type="disulfide bond" evidence="1">
    <location>
        <begin position="153"/>
        <end position="213"/>
    </location>
</feature>
<feature type="disulfide bond" evidence="1">
    <location>
        <begin position="160"/>
        <end position="166"/>
    </location>
</feature>
<feature type="disulfide bond" evidence="1">
    <location>
        <begin position="177"/>
        <end position="191"/>
    </location>
</feature>
<feature type="disulfide bond" evidence="1">
    <location>
        <begin position="186"/>
        <end position="232"/>
    </location>
</feature>
<feature type="disulfide bond" evidence="1">
    <location>
        <begin position="215"/>
        <end position="220"/>
    </location>
</feature>
<feature type="disulfide bond" evidence="1">
    <location>
        <begin position="242"/>
        <end position="312"/>
    </location>
</feature>
<feature type="disulfide bond" evidence="1">
    <location>
        <begin position="249"/>
        <end position="255"/>
    </location>
</feature>
<feature type="disulfide bond" evidence="1">
    <location>
        <begin position="266"/>
        <end position="284"/>
    </location>
</feature>
<feature type="disulfide bond" evidence="1">
    <location>
        <begin position="276"/>
        <end position="336"/>
    </location>
</feature>
<feature type="disulfide bond" evidence="1">
    <location>
        <begin position="314"/>
        <end position="324"/>
    </location>
</feature>
<reference key="1">
    <citation type="journal article" date="1997" name="Nature">
        <title>Neurturin responsiveness requires a GPI-linked receptor and the Ret receptor tyrosine kinase.</title>
        <authorList>
            <person name="Buj-Bello A."/>
            <person name="Adu J."/>
            <person name="Pinon L.G.P."/>
            <person name="Horton A."/>
            <person name="Thompson J."/>
            <person name="Rosenthal A."/>
            <person name="Chinchetru M."/>
            <person name="Buchman V.L."/>
            <person name="Davies A.M."/>
        </authorList>
    </citation>
    <scope>NUCLEOTIDE SEQUENCE [MRNA]</scope>
    <scope>FUNCTION</scope>
    <scope>SUBUNIT</scope>
    <source>
        <tissue>Brain</tissue>
    </source>
</reference>
<organism>
    <name type="scientific">Gallus gallus</name>
    <name type="common">Chicken</name>
    <dbReference type="NCBI Taxonomy" id="9031"/>
    <lineage>
        <taxon>Eukaryota</taxon>
        <taxon>Metazoa</taxon>
        <taxon>Chordata</taxon>
        <taxon>Craniata</taxon>
        <taxon>Vertebrata</taxon>
        <taxon>Euteleostomi</taxon>
        <taxon>Archelosauria</taxon>
        <taxon>Archosauria</taxon>
        <taxon>Dinosauria</taxon>
        <taxon>Saurischia</taxon>
        <taxon>Theropoda</taxon>
        <taxon>Coelurosauria</taxon>
        <taxon>Aves</taxon>
        <taxon>Neognathae</taxon>
        <taxon>Galloanserae</taxon>
        <taxon>Galliformes</taxon>
        <taxon>Phasianidae</taxon>
        <taxon>Phasianinae</taxon>
        <taxon>Gallus</taxon>
    </lineage>
</organism>
<sequence>MFLALLYLALPLADVLLSAEVSGLPGGDRLDCVKASDQCLKEQSCSTKYRTLRQCVAGKESNFSRATGLEAKDECKSAMEALKQKSLYNCRCKRGMKKEKNCLRIYWSMYQSLQGNDLLEDSPYEPVNSRLSDIFRLAPIVSVEPVLSKGNNCLDAAKACNLNDTCKRFRSAYITPCTSSTSNEICNKRKCHKALRLFFDKVPPKHSYGMLFCSCRDVACTERRRQTIVPVCSYEDREKPNCLNLQESCKKNYICRSRLADFFTNCQPESRSVSSCLKENYADCLLAYSGLIGTVMTPNYIDSSSLSVAPWCDCSNSGNDIDECRKFLNFFQDNTCLKNAIQAFGNGTDVNVWQPILPVQTTTATTTTASRLKNTGSETTNNEIPTHNDSPACANLQAQKKRKSNESVDTELCLNENAIGKDNTPGVSTSHISSENSFALPTSFYPSTPLILMTIALSLFLFLSSSVVL</sequence>
<keyword id="KW-1003">Cell membrane</keyword>
<keyword id="KW-1015">Disulfide bond</keyword>
<keyword id="KW-0967">Endosome</keyword>
<keyword id="KW-0325">Glycoprotein</keyword>
<keyword id="KW-0333">Golgi apparatus</keyword>
<keyword id="KW-0336">GPI-anchor</keyword>
<keyword id="KW-0449">Lipoprotein</keyword>
<keyword id="KW-0472">Membrane</keyword>
<keyword id="KW-0675">Receptor</keyword>
<keyword id="KW-1185">Reference proteome</keyword>
<keyword id="KW-0677">Repeat</keyword>
<keyword id="KW-0732">Signal</keyword>
<gene>
    <name type="primary">GFRA1</name>
    <name type="synonym">GDNFRA</name>
</gene>
<name>GFRA1_CHICK</name>
<evidence type="ECO:0000250" key="1">
    <source>
        <dbReference type="UniProtKB" id="P56159"/>
    </source>
</evidence>
<evidence type="ECO:0000250" key="2">
    <source>
        <dbReference type="UniProtKB" id="Q62997"/>
    </source>
</evidence>
<evidence type="ECO:0000255" key="3"/>
<evidence type="ECO:0000269" key="4">
    <source>
    </source>
</evidence>
<evidence type="ECO:0000305" key="5"/>
<protein>
    <recommendedName>
        <fullName>GDNF family receptor alpha-1</fullName>
        <shortName>GDNF receptor alpha-1</shortName>
        <shortName>GDNFR-alpha-1</shortName>
        <shortName>GFR-alpha-1</shortName>
    </recommendedName>
    <alternativeName>
        <fullName>TGF-beta-related neurotrophic factor receptor 1</fullName>
    </alternativeName>
</protein>
<dbReference type="EMBL" id="U90541">
    <property type="protein sequence ID" value="AAB61570.1"/>
    <property type="molecule type" value="mRNA"/>
</dbReference>
<dbReference type="RefSeq" id="NP_990433.1">
    <property type="nucleotide sequence ID" value="NM_205102.2"/>
</dbReference>
<dbReference type="SMR" id="O13156"/>
<dbReference type="FunCoup" id="O13156">
    <property type="interactions" value="9"/>
</dbReference>
<dbReference type="STRING" id="9031.ENSGALP00000014927"/>
<dbReference type="GlyCosmos" id="O13156">
    <property type="glycosylation" value="4 sites, No reported glycans"/>
</dbReference>
<dbReference type="GlyGen" id="O13156">
    <property type="glycosylation" value="4 sites"/>
</dbReference>
<dbReference type="PaxDb" id="9031-ENSGALP00000014927"/>
<dbReference type="GeneID" id="395994"/>
<dbReference type="KEGG" id="gga:395994"/>
<dbReference type="CTD" id="2674"/>
<dbReference type="VEuPathDB" id="HostDB:geneid_395994"/>
<dbReference type="eggNOG" id="ENOG502QQA2">
    <property type="taxonomic scope" value="Eukaryota"/>
</dbReference>
<dbReference type="HOGENOM" id="CLU_040179_1_1_1"/>
<dbReference type="InParanoid" id="O13156"/>
<dbReference type="OMA" id="CKKFLNF"/>
<dbReference type="OrthoDB" id="9435188at2759"/>
<dbReference type="PhylomeDB" id="O13156"/>
<dbReference type="Reactome" id="R-GGA-5673001">
    <property type="pathway name" value="RAF/MAP kinase cascade"/>
</dbReference>
<dbReference type="Reactome" id="R-GGA-8853659">
    <property type="pathway name" value="RET signaling"/>
</dbReference>
<dbReference type="PRO" id="PR:O13156"/>
<dbReference type="Proteomes" id="UP000000539">
    <property type="component" value="Chromosome 6"/>
</dbReference>
<dbReference type="Bgee" id="ENSGALG00000009173">
    <property type="expression patterns" value="Expressed in spleen and 8 other cell types or tissues"/>
</dbReference>
<dbReference type="GO" id="GO:0009897">
    <property type="term" value="C:external side of plasma membrane"/>
    <property type="evidence" value="ECO:0000318"/>
    <property type="project" value="GO_Central"/>
</dbReference>
<dbReference type="GO" id="GO:0005794">
    <property type="term" value="C:Golgi apparatus"/>
    <property type="evidence" value="ECO:0007669"/>
    <property type="project" value="UniProtKB-SubCell"/>
</dbReference>
<dbReference type="GO" id="GO:0005771">
    <property type="term" value="C:multivesicular body"/>
    <property type="evidence" value="ECO:0007669"/>
    <property type="project" value="UniProtKB-SubCell"/>
</dbReference>
<dbReference type="GO" id="GO:0043235">
    <property type="term" value="C:receptor complex"/>
    <property type="evidence" value="ECO:0000318"/>
    <property type="project" value="GO_Central"/>
</dbReference>
<dbReference type="GO" id="GO:0016167">
    <property type="term" value="F:glial cell-derived neurotrophic factor receptor activity"/>
    <property type="evidence" value="ECO:0000250"/>
    <property type="project" value="UniProtKB"/>
</dbReference>
<dbReference type="GO" id="GO:0038023">
    <property type="term" value="F:signaling receptor activity"/>
    <property type="evidence" value="ECO:0000318"/>
    <property type="project" value="GO_Central"/>
</dbReference>
<dbReference type="GO" id="GO:0035860">
    <property type="term" value="P:glial cell-derived neurotrophic factor receptor signaling pathway"/>
    <property type="evidence" value="ECO:0000250"/>
    <property type="project" value="UniProtKB"/>
</dbReference>
<dbReference type="GO" id="GO:0007399">
    <property type="term" value="P:nervous system development"/>
    <property type="evidence" value="ECO:0000318"/>
    <property type="project" value="GO_Central"/>
</dbReference>
<dbReference type="FunFam" id="1.10.220.110:FF:000001">
    <property type="entry name" value="GDNF family receptor alpha"/>
    <property type="match status" value="1"/>
</dbReference>
<dbReference type="Gene3D" id="1.10.220.110">
    <property type="entry name" value="GDNF binding domain"/>
    <property type="match status" value="1"/>
</dbReference>
<dbReference type="InterPro" id="IPR016017">
    <property type="entry name" value="GDNF/GAS1"/>
</dbReference>
<dbReference type="InterPro" id="IPR037193">
    <property type="entry name" value="GDNF_alpha"/>
</dbReference>
<dbReference type="InterPro" id="IPR003438">
    <property type="entry name" value="GDNF_rcpt"/>
</dbReference>
<dbReference type="InterPro" id="IPR003503">
    <property type="entry name" value="GDNF_rcpt_A1"/>
</dbReference>
<dbReference type="InterPro" id="IPR017372">
    <property type="entry name" value="Glial_neurotroph_fac_rcpt_a1/2"/>
</dbReference>
<dbReference type="PANTHER" id="PTHR10269:SF3">
    <property type="entry name" value="GDNF FAMILY RECEPTOR ALPHA-1"/>
    <property type="match status" value="1"/>
</dbReference>
<dbReference type="PANTHER" id="PTHR10269">
    <property type="entry name" value="GDNF RECEPTOR ALPHA"/>
    <property type="match status" value="1"/>
</dbReference>
<dbReference type="Pfam" id="PF02351">
    <property type="entry name" value="GDNF"/>
    <property type="match status" value="3"/>
</dbReference>
<dbReference type="PIRSF" id="PIRSF038071">
    <property type="entry name" value="GDNF_family_receptor_alpha"/>
    <property type="match status" value="1"/>
</dbReference>
<dbReference type="PRINTS" id="PR01317">
    <property type="entry name" value="GDNFRALPHA1"/>
</dbReference>
<dbReference type="PRINTS" id="PR01316">
    <property type="entry name" value="GDNFRECEPTOR"/>
</dbReference>
<dbReference type="SMART" id="SM00907">
    <property type="entry name" value="GDNF"/>
    <property type="match status" value="3"/>
</dbReference>
<dbReference type="SUPFAM" id="SSF110035">
    <property type="entry name" value="GDNF receptor-like"/>
    <property type="match status" value="1"/>
</dbReference>